<protein>
    <recommendedName>
        <fullName evidence="1">Large ribosomal subunit protein bL35</fullName>
    </recommendedName>
    <alternativeName>
        <fullName evidence="3">50S ribosomal protein L35</fullName>
    </alternativeName>
</protein>
<keyword id="KW-0687">Ribonucleoprotein</keyword>
<keyword id="KW-0689">Ribosomal protein</keyword>
<feature type="chain" id="PRO_1000050720" description="Large ribosomal subunit protein bL35">
    <location>
        <begin position="1"/>
        <end position="64"/>
    </location>
</feature>
<feature type="region of interest" description="Disordered" evidence="2">
    <location>
        <begin position="1"/>
        <end position="20"/>
    </location>
</feature>
<feature type="region of interest" description="Disordered" evidence="2">
    <location>
        <begin position="37"/>
        <end position="64"/>
    </location>
</feature>
<comment type="similarity">
    <text evidence="1">Belongs to the bacterial ribosomal protein bL35 family.</text>
</comment>
<sequence length="64" mass="7306">MPKAKTHSGASKRFRRTGTGKIVRQKANRRHLMEHKPTKRTRRLAGRTQVSANDAPRINKMLNG</sequence>
<proteinExistence type="inferred from homology"/>
<dbReference type="EMBL" id="CP000580">
    <property type="protein sequence ID" value="ABN98774.1"/>
    <property type="molecule type" value="Genomic_DNA"/>
</dbReference>
<dbReference type="SMR" id="A3Q0U7"/>
<dbReference type="KEGG" id="mjl:Mjls_2995"/>
<dbReference type="HOGENOM" id="CLU_169643_4_2_11"/>
<dbReference type="BioCyc" id="MSP164757:G1G8C-3018-MONOMER"/>
<dbReference type="GO" id="GO:0022625">
    <property type="term" value="C:cytosolic large ribosomal subunit"/>
    <property type="evidence" value="ECO:0007669"/>
    <property type="project" value="TreeGrafter"/>
</dbReference>
<dbReference type="GO" id="GO:0003735">
    <property type="term" value="F:structural constituent of ribosome"/>
    <property type="evidence" value="ECO:0007669"/>
    <property type="project" value="InterPro"/>
</dbReference>
<dbReference type="GO" id="GO:0006412">
    <property type="term" value="P:translation"/>
    <property type="evidence" value="ECO:0007669"/>
    <property type="project" value="UniProtKB-UniRule"/>
</dbReference>
<dbReference type="FunFam" id="4.10.410.60:FF:000001">
    <property type="entry name" value="50S ribosomal protein L35"/>
    <property type="match status" value="1"/>
</dbReference>
<dbReference type="Gene3D" id="4.10.410.60">
    <property type="match status" value="1"/>
</dbReference>
<dbReference type="HAMAP" id="MF_00514">
    <property type="entry name" value="Ribosomal_bL35"/>
    <property type="match status" value="1"/>
</dbReference>
<dbReference type="InterPro" id="IPR001706">
    <property type="entry name" value="Ribosomal_bL35"/>
</dbReference>
<dbReference type="InterPro" id="IPR021137">
    <property type="entry name" value="Ribosomal_bL35-like"/>
</dbReference>
<dbReference type="InterPro" id="IPR018265">
    <property type="entry name" value="Ribosomal_bL35_CS"/>
</dbReference>
<dbReference type="InterPro" id="IPR037229">
    <property type="entry name" value="Ribosomal_bL35_sf"/>
</dbReference>
<dbReference type="NCBIfam" id="TIGR00001">
    <property type="entry name" value="rpmI_bact"/>
    <property type="match status" value="1"/>
</dbReference>
<dbReference type="PANTHER" id="PTHR33343">
    <property type="entry name" value="54S RIBOSOMAL PROTEIN BL35M"/>
    <property type="match status" value="1"/>
</dbReference>
<dbReference type="PANTHER" id="PTHR33343:SF1">
    <property type="entry name" value="LARGE RIBOSOMAL SUBUNIT PROTEIN BL35M"/>
    <property type="match status" value="1"/>
</dbReference>
<dbReference type="Pfam" id="PF01632">
    <property type="entry name" value="Ribosomal_L35p"/>
    <property type="match status" value="1"/>
</dbReference>
<dbReference type="PRINTS" id="PR00064">
    <property type="entry name" value="RIBOSOMALL35"/>
</dbReference>
<dbReference type="SUPFAM" id="SSF143034">
    <property type="entry name" value="L35p-like"/>
    <property type="match status" value="1"/>
</dbReference>
<dbReference type="PROSITE" id="PS00936">
    <property type="entry name" value="RIBOSOMAL_L35"/>
    <property type="match status" value="1"/>
</dbReference>
<name>RL35_MYCSJ</name>
<organism>
    <name type="scientific">Mycobacterium sp. (strain JLS)</name>
    <dbReference type="NCBI Taxonomy" id="164757"/>
    <lineage>
        <taxon>Bacteria</taxon>
        <taxon>Bacillati</taxon>
        <taxon>Actinomycetota</taxon>
        <taxon>Actinomycetes</taxon>
        <taxon>Mycobacteriales</taxon>
        <taxon>Mycobacteriaceae</taxon>
        <taxon>Mycobacterium</taxon>
    </lineage>
</organism>
<gene>
    <name evidence="1" type="primary">rpmI</name>
    <name type="ordered locus">Mjls_2995</name>
</gene>
<evidence type="ECO:0000255" key="1">
    <source>
        <dbReference type="HAMAP-Rule" id="MF_00514"/>
    </source>
</evidence>
<evidence type="ECO:0000256" key="2">
    <source>
        <dbReference type="SAM" id="MobiDB-lite"/>
    </source>
</evidence>
<evidence type="ECO:0000305" key="3"/>
<accession>A3Q0U7</accession>
<reference key="1">
    <citation type="submission" date="2007-02" db="EMBL/GenBank/DDBJ databases">
        <title>Complete sequence of Mycobacterium sp. JLS.</title>
        <authorList>
            <consortium name="US DOE Joint Genome Institute"/>
            <person name="Copeland A."/>
            <person name="Lucas S."/>
            <person name="Lapidus A."/>
            <person name="Barry K."/>
            <person name="Detter J.C."/>
            <person name="Glavina del Rio T."/>
            <person name="Hammon N."/>
            <person name="Israni S."/>
            <person name="Dalin E."/>
            <person name="Tice H."/>
            <person name="Pitluck S."/>
            <person name="Chain P."/>
            <person name="Malfatti S."/>
            <person name="Shin M."/>
            <person name="Vergez L."/>
            <person name="Schmutz J."/>
            <person name="Larimer F."/>
            <person name="Land M."/>
            <person name="Hauser L."/>
            <person name="Kyrpides N."/>
            <person name="Mikhailova N."/>
            <person name="Miller C.D."/>
            <person name="Anderson A.J."/>
            <person name="Sims R.C."/>
            <person name="Richardson P."/>
        </authorList>
    </citation>
    <scope>NUCLEOTIDE SEQUENCE [LARGE SCALE GENOMIC DNA]</scope>
    <source>
        <strain>JLS</strain>
    </source>
</reference>